<comment type="function">
    <text evidence="1">Phosphorylation of dTMP to form dTDP in both de novo and salvage pathways of dTTP synthesis.</text>
</comment>
<comment type="catalytic activity">
    <reaction evidence="1">
        <text>dTMP + ATP = dTDP + ADP</text>
        <dbReference type="Rhea" id="RHEA:13517"/>
        <dbReference type="ChEBI" id="CHEBI:30616"/>
        <dbReference type="ChEBI" id="CHEBI:58369"/>
        <dbReference type="ChEBI" id="CHEBI:63528"/>
        <dbReference type="ChEBI" id="CHEBI:456216"/>
        <dbReference type="EC" id="2.7.4.9"/>
    </reaction>
</comment>
<comment type="similarity">
    <text evidence="1">Belongs to the thymidylate kinase family.</text>
</comment>
<feature type="chain" id="PRO_1000097401" description="Thymidylate kinase">
    <location>
        <begin position="1"/>
        <end position="191"/>
    </location>
</feature>
<feature type="binding site" evidence="1">
    <location>
        <begin position="7"/>
        <end position="14"/>
    </location>
    <ligand>
        <name>ATP</name>
        <dbReference type="ChEBI" id="CHEBI:30616"/>
    </ligand>
</feature>
<dbReference type="EC" id="2.7.4.9" evidence="1"/>
<dbReference type="EMBL" id="CP001217">
    <property type="protein sequence ID" value="ACJ08600.1"/>
    <property type="molecule type" value="Genomic_DNA"/>
</dbReference>
<dbReference type="SMR" id="B6JNX2"/>
<dbReference type="KEGG" id="hpp:HPP12_1452"/>
<dbReference type="HOGENOM" id="CLU_049131_0_0_7"/>
<dbReference type="Proteomes" id="UP000008198">
    <property type="component" value="Chromosome"/>
</dbReference>
<dbReference type="GO" id="GO:0005829">
    <property type="term" value="C:cytosol"/>
    <property type="evidence" value="ECO:0007669"/>
    <property type="project" value="TreeGrafter"/>
</dbReference>
<dbReference type="GO" id="GO:0005524">
    <property type="term" value="F:ATP binding"/>
    <property type="evidence" value="ECO:0007669"/>
    <property type="project" value="UniProtKB-UniRule"/>
</dbReference>
<dbReference type="GO" id="GO:0004798">
    <property type="term" value="F:dTMP kinase activity"/>
    <property type="evidence" value="ECO:0007669"/>
    <property type="project" value="UniProtKB-UniRule"/>
</dbReference>
<dbReference type="GO" id="GO:0006233">
    <property type="term" value="P:dTDP biosynthetic process"/>
    <property type="evidence" value="ECO:0007669"/>
    <property type="project" value="InterPro"/>
</dbReference>
<dbReference type="GO" id="GO:0006235">
    <property type="term" value="P:dTTP biosynthetic process"/>
    <property type="evidence" value="ECO:0007669"/>
    <property type="project" value="UniProtKB-UniRule"/>
</dbReference>
<dbReference type="GO" id="GO:0006227">
    <property type="term" value="P:dUDP biosynthetic process"/>
    <property type="evidence" value="ECO:0007669"/>
    <property type="project" value="TreeGrafter"/>
</dbReference>
<dbReference type="CDD" id="cd01672">
    <property type="entry name" value="TMPK"/>
    <property type="match status" value="1"/>
</dbReference>
<dbReference type="FunFam" id="3.40.50.300:FF:003325">
    <property type="entry name" value="Thymidylate kinase"/>
    <property type="match status" value="1"/>
</dbReference>
<dbReference type="Gene3D" id="3.40.50.300">
    <property type="entry name" value="P-loop containing nucleotide triphosphate hydrolases"/>
    <property type="match status" value="1"/>
</dbReference>
<dbReference type="HAMAP" id="MF_00165">
    <property type="entry name" value="Thymidylate_kinase"/>
    <property type="match status" value="1"/>
</dbReference>
<dbReference type="InterPro" id="IPR027417">
    <property type="entry name" value="P-loop_NTPase"/>
</dbReference>
<dbReference type="InterPro" id="IPR039430">
    <property type="entry name" value="Thymidylate_kin-like_dom"/>
</dbReference>
<dbReference type="InterPro" id="IPR018095">
    <property type="entry name" value="Thymidylate_kin_CS"/>
</dbReference>
<dbReference type="InterPro" id="IPR018094">
    <property type="entry name" value="Thymidylate_kinase"/>
</dbReference>
<dbReference type="NCBIfam" id="TIGR00041">
    <property type="entry name" value="DTMP_kinase"/>
    <property type="match status" value="1"/>
</dbReference>
<dbReference type="PANTHER" id="PTHR10344">
    <property type="entry name" value="THYMIDYLATE KINASE"/>
    <property type="match status" value="1"/>
</dbReference>
<dbReference type="PANTHER" id="PTHR10344:SF4">
    <property type="entry name" value="UMP-CMP KINASE 2, MITOCHONDRIAL"/>
    <property type="match status" value="1"/>
</dbReference>
<dbReference type="Pfam" id="PF02223">
    <property type="entry name" value="Thymidylate_kin"/>
    <property type="match status" value="1"/>
</dbReference>
<dbReference type="SUPFAM" id="SSF52540">
    <property type="entry name" value="P-loop containing nucleoside triphosphate hydrolases"/>
    <property type="match status" value="1"/>
</dbReference>
<dbReference type="PROSITE" id="PS01331">
    <property type="entry name" value="THYMIDYLATE_KINASE"/>
    <property type="match status" value="1"/>
</dbReference>
<gene>
    <name evidence="1" type="primary">tmk</name>
    <name type="ordered locus">HPP12_1452</name>
</gene>
<accession>B6JNX2</accession>
<sequence>MYVVLEGVDGAGKSTQVGLLKNKFKNALFTKEPGGTKIGESLRRIALNENISELARAFLFLSDRAEHVESVIKPALKEKKLIISDRSLISGMAYSEFSSLELNLLATQSILPTKIVLLLIDKEGLKQRLSLKSLDKIENQGIEKLLTIQRNLKTHAYALREKFGCKVLELNAKESVKNLHEKIAAFIKCVV</sequence>
<name>KTHY_HELP2</name>
<reference key="1">
    <citation type="submission" date="2008-10" db="EMBL/GenBank/DDBJ databases">
        <title>The complete genome sequence of Helicobacter pylori strain P12.</title>
        <authorList>
            <person name="Fischer W."/>
            <person name="Windhager L."/>
            <person name="Karnholz A."/>
            <person name="Zeiller M."/>
            <person name="Zimmer R."/>
            <person name="Haas R."/>
        </authorList>
    </citation>
    <scope>NUCLEOTIDE SEQUENCE [LARGE SCALE GENOMIC DNA]</scope>
    <source>
        <strain>P12</strain>
    </source>
</reference>
<proteinExistence type="inferred from homology"/>
<keyword id="KW-0067">ATP-binding</keyword>
<keyword id="KW-0418">Kinase</keyword>
<keyword id="KW-0545">Nucleotide biosynthesis</keyword>
<keyword id="KW-0547">Nucleotide-binding</keyword>
<keyword id="KW-0808">Transferase</keyword>
<evidence type="ECO:0000255" key="1">
    <source>
        <dbReference type="HAMAP-Rule" id="MF_00165"/>
    </source>
</evidence>
<protein>
    <recommendedName>
        <fullName evidence="1">Thymidylate kinase</fullName>
        <ecNumber evidence="1">2.7.4.9</ecNumber>
    </recommendedName>
    <alternativeName>
        <fullName evidence="1">dTMP kinase</fullName>
    </alternativeName>
</protein>
<organism>
    <name type="scientific">Helicobacter pylori (strain P12)</name>
    <dbReference type="NCBI Taxonomy" id="570508"/>
    <lineage>
        <taxon>Bacteria</taxon>
        <taxon>Pseudomonadati</taxon>
        <taxon>Campylobacterota</taxon>
        <taxon>Epsilonproteobacteria</taxon>
        <taxon>Campylobacterales</taxon>
        <taxon>Helicobacteraceae</taxon>
        <taxon>Helicobacter</taxon>
    </lineage>
</organism>